<accession>B7I9D7</accession>
<organism>
    <name type="scientific">Acinetobacter baumannii (strain AB0057)</name>
    <dbReference type="NCBI Taxonomy" id="480119"/>
    <lineage>
        <taxon>Bacteria</taxon>
        <taxon>Pseudomonadati</taxon>
        <taxon>Pseudomonadota</taxon>
        <taxon>Gammaproteobacteria</taxon>
        <taxon>Moraxellales</taxon>
        <taxon>Moraxellaceae</taxon>
        <taxon>Acinetobacter</taxon>
        <taxon>Acinetobacter calcoaceticus/baumannii complex</taxon>
    </lineage>
</organism>
<evidence type="ECO:0000255" key="1">
    <source>
        <dbReference type="HAMAP-Rule" id="MF_00009"/>
    </source>
</evidence>
<gene>
    <name evidence="1" type="primary">ybeY</name>
    <name type="ordered locus">AB57_3479</name>
</gene>
<protein>
    <recommendedName>
        <fullName evidence="1">Endoribonuclease YbeY</fullName>
        <ecNumber evidence="1">3.1.-.-</ecNumber>
    </recommendedName>
</protein>
<reference key="1">
    <citation type="journal article" date="2008" name="J. Bacteriol.">
        <title>Comparative genome sequence analysis of multidrug-resistant Acinetobacter baumannii.</title>
        <authorList>
            <person name="Adams M.D."/>
            <person name="Goglin K."/>
            <person name="Molyneaux N."/>
            <person name="Hujer K.M."/>
            <person name="Lavender H."/>
            <person name="Jamison J.J."/>
            <person name="MacDonald I.J."/>
            <person name="Martin K.M."/>
            <person name="Russo T."/>
            <person name="Campagnari A.A."/>
            <person name="Hujer A.M."/>
            <person name="Bonomo R.A."/>
            <person name="Gill S.R."/>
        </authorList>
    </citation>
    <scope>NUCLEOTIDE SEQUENCE [LARGE SCALE GENOMIC DNA]</scope>
    <source>
        <strain>AB0057</strain>
    </source>
</reference>
<sequence length="158" mass="17979">MKISLSLQQDFRSPELELKRAQLKKIIETTLRHVGYKEDCEIGIACVDLEESHQLNLQYREKDKPTNVLSFPSDIPEEVLPMLDALPLGDLVICIPVVLQEALEQKKTAQNHFAHLLVHGVLHLLGYDHETSDEDAEEMEGLEIEILAKLNIANPYQE</sequence>
<keyword id="KW-0963">Cytoplasm</keyword>
<keyword id="KW-0255">Endonuclease</keyword>
<keyword id="KW-0378">Hydrolase</keyword>
<keyword id="KW-0479">Metal-binding</keyword>
<keyword id="KW-0540">Nuclease</keyword>
<keyword id="KW-0690">Ribosome biogenesis</keyword>
<keyword id="KW-0698">rRNA processing</keyword>
<keyword id="KW-0862">Zinc</keyword>
<proteinExistence type="inferred from homology"/>
<name>YBEY_ACIB5</name>
<dbReference type="EC" id="3.1.-.-" evidence="1"/>
<dbReference type="EMBL" id="CP001182">
    <property type="protein sequence ID" value="ACJ42046.1"/>
    <property type="molecule type" value="Genomic_DNA"/>
</dbReference>
<dbReference type="RefSeq" id="WP_000703572.1">
    <property type="nucleotide sequence ID" value="NC_011586.2"/>
</dbReference>
<dbReference type="SMR" id="B7I9D7"/>
<dbReference type="KEGG" id="abn:AB57_3479"/>
<dbReference type="HOGENOM" id="CLU_106710_0_1_6"/>
<dbReference type="Proteomes" id="UP000007094">
    <property type="component" value="Chromosome"/>
</dbReference>
<dbReference type="GO" id="GO:0005737">
    <property type="term" value="C:cytoplasm"/>
    <property type="evidence" value="ECO:0007669"/>
    <property type="project" value="UniProtKB-SubCell"/>
</dbReference>
<dbReference type="GO" id="GO:0004222">
    <property type="term" value="F:metalloendopeptidase activity"/>
    <property type="evidence" value="ECO:0007669"/>
    <property type="project" value="InterPro"/>
</dbReference>
<dbReference type="GO" id="GO:0004521">
    <property type="term" value="F:RNA endonuclease activity"/>
    <property type="evidence" value="ECO:0007669"/>
    <property type="project" value="UniProtKB-UniRule"/>
</dbReference>
<dbReference type="GO" id="GO:0008270">
    <property type="term" value="F:zinc ion binding"/>
    <property type="evidence" value="ECO:0007669"/>
    <property type="project" value="UniProtKB-UniRule"/>
</dbReference>
<dbReference type="GO" id="GO:0006364">
    <property type="term" value="P:rRNA processing"/>
    <property type="evidence" value="ECO:0007669"/>
    <property type="project" value="UniProtKB-UniRule"/>
</dbReference>
<dbReference type="Gene3D" id="3.40.390.30">
    <property type="entry name" value="Metalloproteases ('zincins'), catalytic domain"/>
    <property type="match status" value="1"/>
</dbReference>
<dbReference type="HAMAP" id="MF_00009">
    <property type="entry name" value="Endoribonucl_YbeY"/>
    <property type="match status" value="1"/>
</dbReference>
<dbReference type="InterPro" id="IPR023091">
    <property type="entry name" value="MetalPrtase_cat_dom_sf_prd"/>
</dbReference>
<dbReference type="InterPro" id="IPR002036">
    <property type="entry name" value="YbeY"/>
</dbReference>
<dbReference type="InterPro" id="IPR020549">
    <property type="entry name" value="YbeY_CS"/>
</dbReference>
<dbReference type="NCBIfam" id="TIGR00043">
    <property type="entry name" value="rRNA maturation RNase YbeY"/>
    <property type="match status" value="1"/>
</dbReference>
<dbReference type="PANTHER" id="PTHR46986">
    <property type="entry name" value="ENDORIBONUCLEASE YBEY, CHLOROPLASTIC"/>
    <property type="match status" value="1"/>
</dbReference>
<dbReference type="PANTHER" id="PTHR46986:SF1">
    <property type="entry name" value="ENDORIBONUCLEASE YBEY, CHLOROPLASTIC"/>
    <property type="match status" value="1"/>
</dbReference>
<dbReference type="Pfam" id="PF02130">
    <property type="entry name" value="YbeY"/>
    <property type="match status" value="1"/>
</dbReference>
<dbReference type="SUPFAM" id="SSF55486">
    <property type="entry name" value="Metalloproteases ('zincins'), catalytic domain"/>
    <property type="match status" value="1"/>
</dbReference>
<dbReference type="PROSITE" id="PS01306">
    <property type="entry name" value="UPF0054"/>
    <property type="match status" value="1"/>
</dbReference>
<comment type="function">
    <text evidence="1">Single strand-specific metallo-endoribonuclease involved in late-stage 70S ribosome quality control and in maturation of the 3' terminus of the 16S rRNA.</text>
</comment>
<comment type="cofactor">
    <cofactor evidence="1">
        <name>Zn(2+)</name>
        <dbReference type="ChEBI" id="CHEBI:29105"/>
    </cofactor>
    <text evidence="1">Binds 1 zinc ion.</text>
</comment>
<comment type="subcellular location">
    <subcellularLocation>
        <location evidence="1">Cytoplasm</location>
    </subcellularLocation>
</comment>
<comment type="similarity">
    <text evidence="1">Belongs to the endoribonuclease YbeY family.</text>
</comment>
<feature type="chain" id="PRO_1000199940" description="Endoribonuclease YbeY">
    <location>
        <begin position="1"/>
        <end position="158"/>
    </location>
</feature>
<feature type="binding site" evidence="1">
    <location>
        <position position="119"/>
    </location>
    <ligand>
        <name>Zn(2+)</name>
        <dbReference type="ChEBI" id="CHEBI:29105"/>
        <note>catalytic</note>
    </ligand>
</feature>
<feature type="binding site" evidence="1">
    <location>
        <position position="123"/>
    </location>
    <ligand>
        <name>Zn(2+)</name>
        <dbReference type="ChEBI" id="CHEBI:29105"/>
        <note>catalytic</note>
    </ligand>
</feature>
<feature type="binding site" evidence="1">
    <location>
        <position position="129"/>
    </location>
    <ligand>
        <name>Zn(2+)</name>
        <dbReference type="ChEBI" id="CHEBI:29105"/>
        <note>catalytic</note>
    </ligand>
</feature>